<protein>
    <recommendedName>
        <fullName evidence="1">4-diphosphocytidyl-2-C-methyl-D-erythritol kinase</fullName>
        <shortName evidence="1">CMK</shortName>
        <ecNumber evidence="1">2.7.1.148</ecNumber>
    </recommendedName>
    <alternativeName>
        <fullName evidence="1">4-(cytidine-5'-diphospho)-2-C-methyl-D-erythritol kinase</fullName>
    </alternativeName>
</protein>
<evidence type="ECO:0000255" key="1">
    <source>
        <dbReference type="HAMAP-Rule" id="MF_00061"/>
    </source>
</evidence>
<sequence>MKMKAYAKINIALDAIGKREDNYHLLRMIMQTVDLYDVIDIEKSNDSNISISCNKHYVPTDERNLGYKAAVLFRDEFNIKNGVKISIKKNIPVAAGMAGGSTNAAAVLVIMNKLFNVNASLEVLKEIGLKIGADVPYCIEGGTALCEGIGEIITPLKPFENKILVVLKPNFGVSTKEVYTNLDINKIRKHVNIEGLIQAMENDDLDYVSKNMKNVLENVTLKKHTILKNIKEDMRKSGALGAMMSGSGPTVFAFFDDMLTAQRAFEFLKGKYKYSDVYITRTINSNNL</sequence>
<name>ISPE_CLOPS</name>
<dbReference type="EC" id="2.7.1.148" evidence="1"/>
<dbReference type="EMBL" id="CP000312">
    <property type="protein sequence ID" value="ABG86766.1"/>
    <property type="molecule type" value="Genomic_DNA"/>
</dbReference>
<dbReference type="RefSeq" id="WP_011593000.1">
    <property type="nucleotide sequence ID" value="NC_008262.1"/>
</dbReference>
<dbReference type="SMR" id="Q0SQX1"/>
<dbReference type="KEGG" id="cpr:CPR_2186"/>
<dbReference type="UniPathway" id="UPA00056">
    <property type="reaction ID" value="UER00094"/>
</dbReference>
<dbReference type="Proteomes" id="UP000001824">
    <property type="component" value="Chromosome"/>
</dbReference>
<dbReference type="GO" id="GO:0050515">
    <property type="term" value="F:4-(cytidine 5'-diphospho)-2-C-methyl-D-erythritol kinase activity"/>
    <property type="evidence" value="ECO:0007669"/>
    <property type="project" value="UniProtKB-UniRule"/>
</dbReference>
<dbReference type="GO" id="GO:0005524">
    <property type="term" value="F:ATP binding"/>
    <property type="evidence" value="ECO:0007669"/>
    <property type="project" value="UniProtKB-UniRule"/>
</dbReference>
<dbReference type="GO" id="GO:0019288">
    <property type="term" value="P:isopentenyl diphosphate biosynthetic process, methylerythritol 4-phosphate pathway"/>
    <property type="evidence" value="ECO:0007669"/>
    <property type="project" value="UniProtKB-UniRule"/>
</dbReference>
<dbReference type="GO" id="GO:0016114">
    <property type="term" value="P:terpenoid biosynthetic process"/>
    <property type="evidence" value="ECO:0007669"/>
    <property type="project" value="InterPro"/>
</dbReference>
<dbReference type="FunFam" id="3.30.230.10:FF:000029">
    <property type="entry name" value="4-diphosphocytidyl-2-C-methyl-D-erythritol kinase"/>
    <property type="match status" value="1"/>
</dbReference>
<dbReference type="Gene3D" id="3.30.230.10">
    <property type="match status" value="1"/>
</dbReference>
<dbReference type="Gene3D" id="3.30.70.890">
    <property type="entry name" value="GHMP kinase, C-terminal domain"/>
    <property type="match status" value="1"/>
</dbReference>
<dbReference type="HAMAP" id="MF_00061">
    <property type="entry name" value="IspE"/>
    <property type="match status" value="1"/>
</dbReference>
<dbReference type="InterPro" id="IPR013750">
    <property type="entry name" value="GHMP_kinase_C_dom"/>
</dbReference>
<dbReference type="InterPro" id="IPR036554">
    <property type="entry name" value="GHMP_kinase_C_sf"/>
</dbReference>
<dbReference type="InterPro" id="IPR006204">
    <property type="entry name" value="GHMP_kinase_N_dom"/>
</dbReference>
<dbReference type="InterPro" id="IPR004424">
    <property type="entry name" value="IspE"/>
</dbReference>
<dbReference type="InterPro" id="IPR020568">
    <property type="entry name" value="Ribosomal_Su5_D2-typ_SF"/>
</dbReference>
<dbReference type="InterPro" id="IPR014721">
    <property type="entry name" value="Ribsml_uS5_D2-typ_fold_subgr"/>
</dbReference>
<dbReference type="NCBIfam" id="TIGR00154">
    <property type="entry name" value="ispE"/>
    <property type="match status" value="1"/>
</dbReference>
<dbReference type="PANTHER" id="PTHR43527">
    <property type="entry name" value="4-DIPHOSPHOCYTIDYL-2-C-METHYL-D-ERYTHRITOL KINASE, CHLOROPLASTIC"/>
    <property type="match status" value="1"/>
</dbReference>
<dbReference type="PANTHER" id="PTHR43527:SF2">
    <property type="entry name" value="4-DIPHOSPHOCYTIDYL-2-C-METHYL-D-ERYTHRITOL KINASE, CHLOROPLASTIC"/>
    <property type="match status" value="1"/>
</dbReference>
<dbReference type="Pfam" id="PF08544">
    <property type="entry name" value="GHMP_kinases_C"/>
    <property type="match status" value="1"/>
</dbReference>
<dbReference type="Pfam" id="PF00288">
    <property type="entry name" value="GHMP_kinases_N"/>
    <property type="match status" value="1"/>
</dbReference>
<dbReference type="PIRSF" id="PIRSF010376">
    <property type="entry name" value="IspE"/>
    <property type="match status" value="1"/>
</dbReference>
<dbReference type="SUPFAM" id="SSF55060">
    <property type="entry name" value="GHMP Kinase, C-terminal domain"/>
    <property type="match status" value="1"/>
</dbReference>
<dbReference type="SUPFAM" id="SSF54211">
    <property type="entry name" value="Ribosomal protein S5 domain 2-like"/>
    <property type="match status" value="1"/>
</dbReference>
<organism>
    <name type="scientific">Clostridium perfringens (strain SM101 / Type A)</name>
    <dbReference type="NCBI Taxonomy" id="289380"/>
    <lineage>
        <taxon>Bacteria</taxon>
        <taxon>Bacillati</taxon>
        <taxon>Bacillota</taxon>
        <taxon>Clostridia</taxon>
        <taxon>Eubacteriales</taxon>
        <taxon>Clostridiaceae</taxon>
        <taxon>Clostridium</taxon>
    </lineage>
</organism>
<proteinExistence type="inferred from homology"/>
<keyword id="KW-0067">ATP-binding</keyword>
<keyword id="KW-0414">Isoprene biosynthesis</keyword>
<keyword id="KW-0418">Kinase</keyword>
<keyword id="KW-0547">Nucleotide-binding</keyword>
<keyword id="KW-0808">Transferase</keyword>
<accession>Q0SQX1</accession>
<comment type="function">
    <text evidence="1">Catalyzes the phosphorylation of the position 2 hydroxy group of 4-diphosphocytidyl-2C-methyl-D-erythritol.</text>
</comment>
<comment type="catalytic activity">
    <reaction evidence="1">
        <text>4-CDP-2-C-methyl-D-erythritol + ATP = 4-CDP-2-C-methyl-D-erythritol 2-phosphate + ADP + H(+)</text>
        <dbReference type="Rhea" id="RHEA:18437"/>
        <dbReference type="ChEBI" id="CHEBI:15378"/>
        <dbReference type="ChEBI" id="CHEBI:30616"/>
        <dbReference type="ChEBI" id="CHEBI:57823"/>
        <dbReference type="ChEBI" id="CHEBI:57919"/>
        <dbReference type="ChEBI" id="CHEBI:456216"/>
        <dbReference type="EC" id="2.7.1.148"/>
    </reaction>
</comment>
<comment type="pathway">
    <text evidence="1">Isoprenoid biosynthesis; isopentenyl diphosphate biosynthesis via DXP pathway; isopentenyl diphosphate from 1-deoxy-D-xylulose 5-phosphate: step 3/6.</text>
</comment>
<comment type="similarity">
    <text evidence="1">Belongs to the GHMP kinase family. IspE subfamily.</text>
</comment>
<feature type="chain" id="PRO_1000007837" description="4-diphosphocytidyl-2-C-methyl-D-erythritol kinase">
    <location>
        <begin position="1"/>
        <end position="288"/>
    </location>
</feature>
<feature type="active site" evidence="1">
    <location>
        <position position="8"/>
    </location>
</feature>
<feature type="active site" evidence="1">
    <location>
        <position position="134"/>
    </location>
</feature>
<feature type="binding site" evidence="1">
    <location>
        <begin position="92"/>
        <end position="102"/>
    </location>
    <ligand>
        <name>ATP</name>
        <dbReference type="ChEBI" id="CHEBI:30616"/>
    </ligand>
</feature>
<reference key="1">
    <citation type="journal article" date="2006" name="Genome Res.">
        <title>Skewed genomic variability in strains of the toxigenic bacterial pathogen, Clostridium perfringens.</title>
        <authorList>
            <person name="Myers G.S.A."/>
            <person name="Rasko D.A."/>
            <person name="Cheung J.K."/>
            <person name="Ravel J."/>
            <person name="Seshadri R."/>
            <person name="DeBoy R.T."/>
            <person name="Ren Q."/>
            <person name="Varga J."/>
            <person name="Awad M.M."/>
            <person name="Brinkac L.M."/>
            <person name="Daugherty S.C."/>
            <person name="Haft D.H."/>
            <person name="Dodson R.J."/>
            <person name="Madupu R."/>
            <person name="Nelson W.C."/>
            <person name="Rosovitz M.J."/>
            <person name="Sullivan S.A."/>
            <person name="Khouri H."/>
            <person name="Dimitrov G.I."/>
            <person name="Watkins K.L."/>
            <person name="Mulligan S."/>
            <person name="Benton J."/>
            <person name="Radune D."/>
            <person name="Fisher D.J."/>
            <person name="Atkins H.S."/>
            <person name="Hiscox T."/>
            <person name="Jost B.H."/>
            <person name="Billington S.J."/>
            <person name="Songer J.G."/>
            <person name="McClane B.A."/>
            <person name="Titball R.W."/>
            <person name="Rood J.I."/>
            <person name="Melville S.B."/>
            <person name="Paulsen I.T."/>
        </authorList>
    </citation>
    <scope>NUCLEOTIDE SEQUENCE [LARGE SCALE GENOMIC DNA]</scope>
    <source>
        <strain>SM101 / Type A</strain>
    </source>
</reference>
<gene>
    <name evidence="1" type="primary">ispE</name>
    <name type="ordered locus">CPR_2186</name>
</gene>